<protein>
    <recommendedName>
        <fullName evidence="1">ATP synthase subunit delta</fullName>
    </recommendedName>
    <alternativeName>
        <fullName evidence="1">ATP synthase F(1) sector subunit delta</fullName>
    </alternativeName>
    <alternativeName>
        <fullName evidence="1">F-type ATPase subunit delta</fullName>
        <shortName evidence="1">F-ATPase subunit delta</shortName>
    </alternativeName>
</protein>
<organism>
    <name type="scientific">Listeria monocytogenes serovar 1/2a (strain ATCC BAA-679 / EGD-e)</name>
    <dbReference type="NCBI Taxonomy" id="169963"/>
    <lineage>
        <taxon>Bacteria</taxon>
        <taxon>Bacillati</taxon>
        <taxon>Bacillota</taxon>
        <taxon>Bacilli</taxon>
        <taxon>Bacillales</taxon>
        <taxon>Listeriaceae</taxon>
        <taxon>Listeria</taxon>
    </lineage>
</organism>
<evidence type="ECO:0000255" key="1">
    <source>
        <dbReference type="HAMAP-Rule" id="MF_01416"/>
    </source>
</evidence>
<comment type="function">
    <text evidence="1">F(1)F(0) ATP synthase produces ATP from ADP in the presence of a proton or sodium gradient. F-type ATPases consist of two structural domains, F(1) containing the extramembraneous catalytic core and F(0) containing the membrane proton channel, linked together by a central stalk and a peripheral stalk. During catalysis, ATP synthesis in the catalytic domain of F(1) is coupled via a rotary mechanism of the central stalk subunits to proton translocation.</text>
</comment>
<comment type="function">
    <text evidence="1">This protein is part of the stalk that links CF(0) to CF(1). It either transmits conformational changes from CF(0) to CF(1) or is implicated in proton conduction.</text>
</comment>
<comment type="subunit">
    <text evidence="1">F-type ATPases have 2 components, F(1) - the catalytic core - and F(0) - the membrane proton channel. F(1) has five subunits: alpha(3), beta(3), gamma(1), delta(1), epsilon(1). F(0) has three main subunits: a(1), b(2) and c(10-14). The alpha and beta chains form an alternating ring which encloses part of the gamma chain. F(1) is attached to F(0) by a central stalk formed by the gamma and epsilon chains, while a peripheral stalk is formed by the delta and b chains.</text>
</comment>
<comment type="subcellular location">
    <subcellularLocation>
        <location evidence="1">Cell membrane</location>
        <topology evidence="1">Peripheral membrane protein</topology>
    </subcellularLocation>
</comment>
<comment type="similarity">
    <text evidence="1">Belongs to the ATPase delta chain family.</text>
</comment>
<gene>
    <name evidence="1" type="primary">atpH</name>
    <name type="ordered locus">lmo2532</name>
</gene>
<name>ATPD_LISMO</name>
<feature type="chain" id="PRO_0000382113" description="ATP synthase subunit delta">
    <location>
        <begin position="1"/>
        <end position="179"/>
    </location>
</feature>
<dbReference type="EMBL" id="AL591983">
    <property type="protein sequence ID" value="CAD00610.1"/>
    <property type="molecule type" value="Genomic_DNA"/>
</dbReference>
<dbReference type="PIR" id="AD1391">
    <property type="entry name" value="AD1391"/>
</dbReference>
<dbReference type="RefSeq" id="NP_466055.1">
    <property type="nucleotide sequence ID" value="NC_003210.1"/>
</dbReference>
<dbReference type="RefSeq" id="WP_003732515.1">
    <property type="nucleotide sequence ID" value="NZ_CP149495.1"/>
</dbReference>
<dbReference type="SMR" id="Q8Y4B9"/>
<dbReference type="STRING" id="169963.gene:17595243"/>
<dbReference type="PaxDb" id="169963-lmo2532"/>
<dbReference type="EnsemblBacteria" id="CAD00610">
    <property type="protein sequence ID" value="CAD00610"/>
    <property type="gene ID" value="CAD00610"/>
</dbReference>
<dbReference type="GeneID" id="986758"/>
<dbReference type="KEGG" id="lmo:lmo2532"/>
<dbReference type="PATRIC" id="fig|169963.11.peg.2593"/>
<dbReference type="eggNOG" id="COG0712">
    <property type="taxonomic scope" value="Bacteria"/>
</dbReference>
<dbReference type="HOGENOM" id="CLU_085114_1_1_9"/>
<dbReference type="OrthoDB" id="9802471at2"/>
<dbReference type="PhylomeDB" id="Q8Y4B9"/>
<dbReference type="BioCyc" id="LMON169963:LMO2532-MONOMER"/>
<dbReference type="Proteomes" id="UP000000817">
    <property type="component" value="Chromosome"/>
</dbReference>
<dbReference type="GO" id="GO:0005886">
    <property type="term" value="C:plasma membrane"/>
    <property type="evidence" value="ECO:0007669"/>
    <property type="project" value="UniProtKB-SubCell"/>
</dbReference>
<dbReference type="GO" id="GO:0045259">
    <property type="term" value="C:proton-transporting ATP synthase complex"/>
    <property type="evidence" value="ECO:0007669"/>
    <property type="project" value="UniProtKB-KW"/>
</dbReference>
<dbReference type="GO" id="GO:0046933">
    <property type="term" value="F:proton-transporting ATP synthase activity, rotational mechanism"/>
    <property type="evidence" value="ECO:0007669"/>
    <property type="project" value="UniProtKB-UniRule"/>
</dbReference>
<dbReference type="GO" id="GO:0015986">
    <property type="term" value="P:proton motive force-driven ATP synthesis"/>
    <property type="evidence" value="ECO:0000318"/>
    <property type="project" value="GO_Central"/>
</dbReference>
<dbReference type="Gene3D" id="1.10.520.20">
    <property type="entry name" value="N-terminal domain of the delta subunit of the F1F0-ATP synthase"/>
    <property type="match status" value="1"/>
</dbReference>
<dbReference type="HAMAP" id="MF_01416">
    <property type="entry name" value="ATP_synth_delta_bact"/>
    <property type="match status" value="1"/>
</dbReference>
<dbReference type="InterPro" id="IPR026015">
    <property type="entry name" value="ATP_synth_OSCP/delta_N_sf"/>
</dbReference>
<dbReference type="InterPro" id="IPR000711">
    <property type="entry name" value="ATPase_OSCP/dsu"/>
</dbReference>
<dbReference type="NCBIfam" id="TIGR01145">
    <property type="entry name" value="ATP_synt_delta"/>
    <property type="match status" value="1"/>
</dbReference>
<dbReference type="NCBIfam" id="NF004403">
    <property type="entry name" value="PRK05758.2-4"/>
    <property type="match status" value="1"/>
</dbReference>
<dbReference type="PANTHER" id="PTHR11910">
    <property type="entry name" value="ATP SYNTHASE DELTA CHAIN"/>
    <property type="match status" value="1"/>
</dbReference>
<dbReference type="Pfam" id="PF00213">
    <property type="entry name" value="OSCP"/>
    <property type="match status" value="1"/>
</dbReference>
<dbReference type="PRINTS" id="PR00125">
    <property type="entry name" value="ATPASEDELTA"/>
</dbReference>
<dbReference type="SUPFAM" id="SSF47928">
    <property type="entry name" value="N-terminal domain of the delta subunit of the F1F0-ATP synthase"/>
    <property type="match status" value="1"/>
</dbReference>
<keyword id="KW-0066">ATP synthesis</keyword>
<keyword id="KW-1003">Cell membrane</keyword>
<keyword id="KW-0139">CF(1)</keyword>
<keyword id="KW-0375">Hydrogen ion transport</keyword>
<keyword id="KW-0406">Ion transport</keyword>
<keyword id="KW-0472">Membrane</keyword>
<keyword id="KW-1185">Reference proteome</keyword>
<keyword id="KW-0813">Transport</keyword>
<reference key="1">
    <citation type="journal article" date="2001" name="Science">
        <title>Comparative genomics of Listeria species.</title>
        <authorList>
            <person name="Glaser P."/>
            <person name="Frangeul L."/>
            <person name="Buchrieser C."/>
            <person name="Rusniok C."/>
            <person name="Amend A."/>
            <person name="Baquero F."/>
            <person name="Berche P."/>
            <person name="Bloecker H."/>
            <person name="Brandt P."/>
            <person name="Chakraborty T."/>
            <person name="Charbit A."/>
            <person name="Chetouani F."/>
            <person name="Couve E."/>
            <person name="de Daruvar A."/>
            <person name="Dehoux P."/>
            <person name="Domann E."/>
            <person name="Dominguez-Bernal G."/>
            <person name="Duchaud E."/>
            <person name="Durant L."/>
            <person name="Dussurget O."/>
            <person name="Entian K.-D."/>
            <person name="Fsihi H."/>
            <person name="Garcia-del Portillo F."/>
            <person name="Garrido P."/>
            <person name="Gautier L."/>
            <person name="Goebel W."/>
            <person name="Gomez-Lopez N."/>
            <person name="Hain T."/>
            <person name="Hauf J."/>
            <person name="Jackson D."/>
            <person name="Jones L.-M."/>
            <person name="Kaerst U."/>
            <person name="Kreft J."/>
            <person name="Kuhn M."/>
            <person name="Kunst F."/>
            <person name="Kurapkat G."/>
            <person name="Madueno E."/>
            <person name="Maitournam A."/>
            <person name="Mata Vicente J."/>
            <person name="Ng E."/>
            <person name="Nedjari H."/>
            <person name="Nordsiek G."/>
            <person name="Novella S."/>
            <person name="de Pablos B."/>
            <person name="Perez-Diaz J.-C."/>
            <person name="Purcell R."/>
            <person name="Remmel B."/>
            <person name="Rose M."/>
            <person name="Schlueter T."/>
            <person name="Simoes N."/>
            <person name="Tierrez A."/>
            <person name="Vazquez-Boland J.-A."/>
            <person name="Voss H."/>
            <person name="Wehland J."/>
            <person name="Cossart P."/>
        </authorList>
    </citation>
    <scope>NUCLEOTIDE SEQUENCE [LARGE SCALE GENOMIC DNA]</scope>
    <source>
        <strain>ATCC BAA-679 / EGD-e</strain>
    </source>
</reference>
<proteinExistence type="inferred from homology"/>
<sequence length="179" mass="20302">MSKDLEVAGRYANALFQVAQDKDLVDVFSEELTELKAALKANKDFVKLLENPTFTTEQKKNLASAVFEKINPTLRDFIYLLIDRSREDYLSVIADVYQKRVNDLRGVADADVYSVVPLSEQELTALSRVFATKMNKTKLNIQNHIDKSLLGGVKVVIGTRIYDDSLKTKLKDMERQIKA</sequence>
<accession>Q8Y4B9</accession>